<protein>
    <recommendedName>
        <fullName evidence="1">LexA repressor</fullName>
        <ecNumber evidence="1">3.4.21.88</ecNumber>
    </recommendedName>
</protein>
<gene>
    <name evidence="1" type="primary">lexA</name>
    <name type="ordered locus">RL2236</name>
</gene>
<reference key="1">
    <citation type="journal article" date="2006" name="Genome Biol.">
        <title>The genome of Rhizobium leguminosarum has recognizable core and accessory components.</title>
        <authorList>
            <person name="Young J.P.W."/>
            <person name="Crossman L.C."/>
            <person name="Johnston A.W.B."/>
            <person name="Thomson N.R."/>
            <person name="Ghazoui Z.F."/>
            <person name="Hull K.H."/>
            <person name="Wexler M."/>
            <person name="Curson A.R.J."/>
            <person name="Todd J.D."/>
            <person name="Poole P.S."/>
            <person name="Mauchline T.H."/>
            <person name="East A.K."/>
            <person name="Quail M.A."/>
            <person name="Churcher C."/>
            <person name="Arrowsmith C."/>
            <person name="Cherevach I."/>
            <person name="Chillingworth T."/>
            <person name="Clarke K."/>
            <person name="Cronin A."/>
            <person name="Davis P."/>
            <person name="Fraser A."/>
            <person name="Hance Z."/>
            <person name="Hauser H."/>
            <person name="Jagels K."/>
            <person name="Moule S."/>
            <person name="Mungall K."/>
            <person name="Norbertczak H."/>
            <person name="Rabbinowitsch E."/>
            <person name="Sanders M."/>
            <person name="Simmonds M."/>
            <person name="Whitehead S."/>
            <person name="Parkhill J."/>
        </authorList>
    </citation>
    <scope>NUCLEOTIDE SEQUENCE [LARGE SCALE GENOMIC DNA]</scope>
    <source>
        <strain>DSM 114642 / LMG 32736 / 3841</strain>
    </source>
</reference>
<name>LEXA_RHIJ3</name>
<feature type="chain" id="PRO_1000001324" description="LexA repressor">
    <location>
        <begin position="1"/>
        <end position="239"/>
    </location>
</feature>
<feature type="DNA-binding region" description="H-T-H motif" evidence="1">
    <location>
        <begin position="26"/>
        <end position="46"/>
    </location>
</feature>
<feature type="region of interest" description="Disordered" evidence="2">
    <location>
        <begin position="84"/>
        <end position="107"/>
    </location>
</feature>
<feature type="active site" description="For autocatalytic cleavage activity" evidence="1">
    <location>
        <position position="159"/>
    </location>
</feature>
<feature type="active site" description="For autocatalytic cleavage activity" evidence="1">
    <location>
        <position position="197"/>
    </location>
</feature>
<feature type="site" description="Cleavage; by autolysis" evidence="1">
    <location>
        <begin position="124"/>
        <end position="125"/>
    </location>
</feature>
<accession>Q1MH39</accession>
<dbReference type="EC" id="3.4.21.88" evidence="1"/>
<dbReference type="EMBL" id="AM236080">
    <property type="protein sequence ID" value="CAK07728.1"/>
    <property type="molecule type" value="Genomic_DNA"/>
</dbReference>
<dbReference type="RefSeq" id="WP_011651826.1">
    <property type="nucleotide sequence ID" value="NC_008380.1"/>
</dbReference>
<dbReference type="SMR" id="Q1MH39"/>
<dbReference type="MEROPS" id="S24.001"/>
<dbReference type="EnsemblBacteria" id="CAK07728">
    <property type="protein sequence ID" value="CAK07728"/>
    <property type="gene ID" value="RL2236"/>
</dbReference>
<dbReference type="KEGG" id="rle:RL2236"/>
<dbReference type="eggNOG" id="COG1974">
    <property type="taxonomic scope" value="Bacteria"/>
</dbReference>
<dbReference type="HOGENOM" id="CLU_066192_45_2_5"/>
<dbReference type="Proteomes" id="UP000006575">
    <property type="component" value="Chromosome"/>
</dbReference>
<dbReference type="GO" id="GO:0003677">
    <property type="term" value="F:DNA binding"/>
    <property type="evidence" value="ECO:0007669"/>
    <property type="project" value="UniProtKB-UniRule"/>
</dbReference>
<dbReference type="GO" id="GO:0004252">
    <property type="term" value="F:serine-type endopeptidase activity"/>
    <property type="evidence" value="ECO:0007669"/>
    <property type="project" value="UniProtKB-UniRule"/>
</dbReference>
<dbReference type="GO" id="GO:0006281">
    <property type="term" value="P:DNA repair"/>
    <property type="evidence" value="ECO:0007669"/>
    <property type="project" value="UniProtKB-UniRule"/>
</dbReference>
<dbReference type="GO" id="GO:0006260">
    <property type="term" value="P:DNA replication"/>
    <property type="evidence" value="ECO:0007669"/>
    <property type="project" value="UniProtKB-UniRule"/>
</dbReference>
<dbReference type="GO" id="GO:0045892">
    <property type="term" value="P:negative regulation of DNA-templated transcription"/>
    <property type="evidence" value="ECO:0007669"/>
    <property type="project" value="UniProtKB-UniRule"/>
</dbReference>
<dbReference type="GO" id="GO:0006508">
    <property type="term" value="P:proteolysis"/>
    <property type="evidence" value="ECO:0007669"/>
    <property type="project" value="InterPro"/>
</dbReference>
<dbReference type="GO" id="GO:0009432">
    <property type="term" value="P:SOS response"/>
    <property type="evidence" value="ECO:0007669"/>
    <property type="project" value="UniProtKB-UniRule"/>
</dbReference>
<dbReference type="CDD" id="cd06529">
    <property type="entry name" value="S24_LexA-like"/>
    <property type="match status" value="1"/>
</dbReference>
<dbReference type="FunFam" id="1.10.10.10:FF:000102">
    <property type="entry name" value="LexA repressor"/>
    <property type="match status" value="1"/>
</dbReference>
<dbReference type="FunFam" id="2.10.109.10:FF:000001">
    <property type="entry name" value="LexA repressor"/>
    <property type="match status" value="1"/>
</dbReference>
<dbReference type="Gene3D" id="2.10.109.10">
    <property type="entry name" value="Umud Fragment, subunit A"/>
    <property type="match status" value="1"/>
</dbReference>
<dbReference type="Gene3D" id="1.10.10.10">
    <property type="entry name" value="Winged helix-like DNA-binding domain superfamily/Winged helix DNA-binding domain"/>
    <property type="match status" value="1"/>
</dbReference>
<dbReference type="HAMAP" id="MF_00015">
    <property type="entry name" value="LexA"/>
    <property type="match status" value="1"/>
</dbReference>
<dbReference type="InterPro" id="IPR006200">
    <property type="entry name" value="LexA"/>
</dbReference>
<dbReference type="InterPro" id="IPR039418">
    <property type="entry name" value="LexA-like"/>
</dbReference>
<dbReference type="InterPro" id="IPR036286">
    <property type="entry name" value="LexA/Signal_pep-like_sf"/>
</dbReference>
<dbReference type="InterPro" id="IPR006199">
    <property type="entry name" value="LexA_DNA-bd_dom"/>
</dbReference>
<dbReference type="InterPro" id="IPR050077">
    <property type="entry name" value="LexA_repressor"/>
</dbReference>
<dbReference type="InterPro" id="IPR006197">
    <property type="entry name" value="Peptidase_S24_LexA"/>
</dbReference>
<dbReference type="InterPro" id="IPR015927">
    <property type="entry name" value="Peptidase_S24_S26A/B/C"/>
</dbReference>
<dbReference type="InterPro" id="IPR036388">
    <property type="entry name" value="WH-like_DNA-bd_sf"/>
</dbReference>
<dbReference type="InterPro" id="IPR036390">
    <property type="entry name" value="WH_DNA-bd_sf"/>
</dbReference>
<dbReference type="NCBIfam" id="TIGR00498">
    <property type="entry name" value="lexA"/>
    <property type="match status" value="1"/>
</dbReference>
<dbReference type="PANTHER" id="PTHR33516">
    <property type="entry name" value="LEXA REPRESSOR"/>
    <property type="match status" value="1"/>
</dbReference>
<dbReference type="PANTHER" id="PTHR33516:SF2">
    <property type="entry name" value="LEXA REPRESSOR-RELATED"/>
    <property type="match status" value="1"/>
</dbReference>
<dbReference type="Pfam" id="PF01726">
    <property type="entry name" value="LexA_DNA_bind"/>
    <property type="match status" value="1"/>
</dbReference>
<dbReference type="Pfam" id="PF00717">
    <property type="entry name" value="Peptidase_S24"/>
    <property type="match status" value="1"/>
</dbReference>
<dbReference type="PRINTS" id="PR00726">
    <property type="entry name" value="LEXASERPTASE"/>
</dbReference>
<dbReference type="SUPFAM" id="SSF51306">
    <property type="entry name" value="LexA/Signal peptidase"/>
    <property type="match status" value="1"/>
</dbReference>
<dbReference type="SUPFAM" id="SSF46785">
    <property type="entry name" value="Winged helix' DNA-binding domain"/>
    <property type="match status" value="1"/>
</dbReference>
<proteinExistence type="inferred from homology"/>
<comment type="function">
    <text evidence="1">Represses a number of genes involved in the response to DNA damage (SOS response), including recA and lexA. In the presence of single-stranded DNA, RecA interacts with LexA causing an autocatalytic cleavage which disrupts the DNA-binding part of LexA, leading to derepression of the SOS regulon and eventually DNA repair.</text>
</comment>
<comment type="catalytic activity">
    <reaction evidence="1">
        <text>Hydrolysis of Ala-|-Gly bond in repressor LexA.</text>
        <dbReference type="EC" id="3.4.21.88"/>
    </reaction>
</comment>
<comment type="subunit">
    <text evidence="1">Homodimer.</text>
</comment>
<comment type="similarity">
    <text evidence="1">Belongs to the peptidase S24 family.</text>
</comment>
<organism>
    <name type="scientific">Rhizobium johnstonii (strain DSM 114642 / LMG 32736 / 3841)</name>
    <name type="common">Rhizobium leguminosarum bv. viciae</name>
    <dbReference type="NCBI Taxonomy" id="216596"/>
    <lineage>
        <taxon>Bacteria</taxon>
        <taxon>Pseudomonadati</taxon>
        <taxon>Pseudomonadota</taxon>
        <taxon>Alphaproteobacteria</taxon>
        <taxon>Hyphomicrobiales</taxon>
        <taxon>Rhizobiaceae</taxon>
        <taxon>Rhizobium/Agrobacterium group</taxon>
        <taxon>Rhizobium</taxon>
        <taxon>Rhizobium johnstonii</taxon>
    </lineage>
</organism>
<sequence length="239" mass="25853">MLTRKQQELLLFIHERMKESGVPPSFDEMKDALDLASKSGIHRLITALEERGFIRRLPNRARALEVIKLPEAYSPSIQPRRGFSPSVIEGSLGKPQPVATPAPAKSVADNGNSVSVPVMGRIAAGVPISAIQNNTHDIVVPADMLGSGEHYALEVKGDSMIDAGIFDGDTVIIRNGSTASPGDIVVALVDDEEATLKRFRRKGASIALEAANPAYETRIFGPDRVKVQGKLVGLIRRYH</sequence>
<keyword id="KW-0068">Autocatalytic cleavage</keyword>
<keyword id="KW-0227">DNA damage</keyword>
<keyword id="KW-0234">DNA repair</keyword>
<keyword id="KW-0235">DNA replication</keyword>
<keyword id="KW-0238">DNA-binding</keyword>
<keyword id="KW-0378">Hydrolase</keyword>
<keyword id="KW-0678">Repressor</keyword>
<keyword id="KW-0742">SOS response</keyword>
<keyword id="KW-0804">Transcription</keyword>
<keyword id="KW-0805">Transcription regulation</keyword>
<evidence type="ECO:0000255" key="1">
    <source>
        <dbReference type="HAMAP-Rule" id="MF_00015"/>
    </source>
</evidence>
<evidence type="ECO:0000256" key="2">
    <source>
        <dbReference type="SAM" id="MobiDB-lite"/>
    </source>
</evidence>